<sequence length="245" mass="27220">MNRTRPLPEIKMVSANKTASILEERTGHRFLNLKRLERALTHSSVQAPARANYERLEFLGDRVLGLTVAEMLFEAFPEASEGELSVRLNALVNAETCAAIADEIGLADLIHTGSDIKSLNDKRLLNVRADVVEALIATIYLDGGLEAARSFIQRYWKKRSLETGAARRDAKTELQEWAHQQGNVHPVYAILSRSGPDHDPLFLVEVTVKGFAPEKGEGRSKRIAEQSAAEAMLYREGVWKRDGSA</sequence>
<reference key="1">
    <citation type="submission" date="2007-10" db="EMBL/GenBank/DDBJ databases">
        <title>Brucella canis ATCC 23365 whole genome shotgun sequencing project.</title>
        <authorList>
            <person name="Setubal J.C."/>
            <person name="Bowns C."/>
            <person name="Boyle S."/>
            <person name="Crasta O.R."/>
            <person name="Czar M.J."/>
            <person name="Dharmanolla C."/>
            <person name="Gillespie J.J."/>
            <person name="Kenyon R.W."/>
            <person name="Lu J."/>
            <person name="Mane S."/>
            <person name="Mohapatra S."/>
            <person name="Nagrani S."/>
            <person name="Purkayastha A."/>
            <person name="Rajasimha H.K."/>
            <person name="Shallom J.M."/>
            <person name="Shallom S."/>
            <person name="Shukla M."/>
            <person name="Snyder E.E."/>
            <person name="Sobral B.W."/>
            <person name="Wattam A.R."/>
            <person name="Will R."/>
            <person name="Williams K."/>
            <person name="Yoo H."/>
            <person name="Bruce D."/>
            <person name="Detter C."/>
            <person name="Munk C."/>
            <person name="Brettin T.S."/>
        </authorList>
    </citation>
    <scope>NUCLEOTIDE SEQUENCE [LARGE SCALE GENOMIC DNA]</scope>
    <source>
        <strain>ATCC 23365 / NCTC 10854 / RM-666</strain>
    </source>
</reference>
<feature type="chain" id="PRO_1000075729" description="Ribonuclease 3">
    <location>
        <begin position="1"/>
        <end position="245"/>
    </location>
</feature>
<feature type="domain" description="RNase III" evidence="1">
    <location>
        <begin position="19"/>
        <end position="144"/>
    </location>
</feature>
<feature type="domain" description="DRBM" evidence="1">
    <location>
        <begin position="169"/>
        <end position="238"/>
    </location>
</feature>
<feature type="active site" evidence="1">
    <location>
        <position position="61"/>
    </location>
</feature>
<feature type="active site" evidence="1">
    <location>
        <position position="133"/>
    </location>
</feature>
<feature type="binding site" evidence="1">
    <location>
        <position position="57"/>
    </location>
    <ligand>
        <name>Mg(2+)</name>
        <dbReference type="ChEBI" id="CHEBI:18420"/>
    </ligand>
</feature>
<feature type="binding site" evidence="1">
    <location>
        <position position="130"/>
    </location>
    <ligand>
        <name>Mg(2+)</name>
        <dbReference type="ChEBI" id="CHEBI:18420"/>
    </ligand>
</feature>
<feature type="binding site" evidence="1">
    <location>
        <position position="133"/>
    </location>
    <ligand>
        <name>Mg(2+)</name>
        <dbReference type="ChEBI" id="CHEBI:18420"/>
    </ligand>
</feature>
<comment type="function">
    <text evidence="1">Digests double-stranded RNA. Involved in the processing of primary rRNA transcript to yield the immediate precursors to the large and small rRNAs (23S and 16S). Processes some mRNAs, and tRNAs when they are encoded in the rRNA operon. Processes pre-crRNA and tracrRNA of type II CRISPR loci if present in the organism.</text>
</comment>
<comment type="catalytic activity">
    <reaction evidence="1">
        <text>Endonucleolytic cleavage to 5'-phosphomonoester.</text>
        <dbReference type="EC" id="3.1.26.3"/>
    </reaction>
</comment>
<comment type="cofactor">
    <cofactor evidence="1">
        <name>Mg(2+)</name>
        <dbReference type="ChEBI" id="CHEBI:18420"/>
    </cofactor>
</comment>
<comment type="subunit">
    <text evidence="1">Homodimer.</text>
</comment>
<comment type="subcellular location">
    <subcellularLocation>
        <location evidence="1">Cytoplasm</location>
    </subcellularLocation>
</comment>
<comment type="similarity">
    <text evidence="1">Belongs to the ribonuclease III family.</text>
</comment>
<keyword id="KW-0963">Cytoplasm</keyword>
<keyword id="KW-0255">Endonuclease</keyword>
<keyword id="KW-0378">Hydrolase</keyword>
<keyword id="KW-0460">Magnesium</keyword>
<keyword id="KW-0479">Metal-binding</keyword>
<keyword id="KW-0507">mRNA processing</keyword>
<keyword id="KW-0540">Nuclease</keyword>
<keyword id="KW-1185">Reference proteome</keyword>
<keyword id="KW-0694">RNA-binding</keyword>
<keyword id="KW-0698">rRNA processing</keyword>
<keyword id="KW-0699">rRNA-binding</keyword>
<keyword id="KW-0819">tRNA processing</keyword>
<accession>A9MA35</accession>
<name>RNC_BRUC2</name>
<gene>
    <name evidence="1" type="primary">rnc</name>
    <name type="ordered locus">BCAN_A0674</name>
</gene>
<dbReference type="EC" id="3.1.26.3" evidence="1"/>
<dbReference type="EMBL" id="CP000872">
    <property type="protein sequence ID" value="ABX61747.1"/>
    <property type="molecule type" value="Genomic_DNA"/>
</dbReference>
<dbReference type="SMR" id="A9MA35"/>
<dbReference type="KEGG" id="bcs:BCAN_A0674"/>
<dbReference type="HOGENOM" id="CLU_000907_1_1_5"/>
<dbReference type="Proteomes" id="UP000001385">
    <property type="component" value="Chromosome I"/>
</dbReference>
<dbReference type="GO" id="GO:0005737">
    <property type="term" value="C:cytoplasm"/>
    <property type="evidence" value="ECO:0007669"/>
    <property type="project" value="UniProtKB-SubCell"/>
</dbReference>
<dbReference type="GO" id="GO:0003725">
    <property type="term" value="F:double-stranded RNA binding"/>
    <property type="evidence" value="ECO:0007669"/>
    <property type="project" value="TreeGrafter"/>
</dbReference>
<dbReference type="GO" id="GO:0046872">
    <property type="term" value="F:metal ion binding"/>
    <property type="evidence" value="ECO:0007669"/>
    <property type="project" value="UniProtKB-KW"/>
</dbReference>
<dbReference type="GO" id="GO:0004525">
    <property type="term" value="F:ribonuclease III activity"/>
    <property type="evidence" value="ECO:0007669"/>
    <property type="project" value="UniProtKB-UniRule"/>
</dbReference>
<dbReference type="GO" id="GO:0019843">
    <property type="term" value="F:rRNA binding"/>
    <property type="evidence" value="ECO:0007669"/>
    <property type="project" value="UniProtKB-KW"/>
</dbReference>
<dbReference type="GO" id="GO:0006397">
    <property type="term" value="P:mRNA processing"/>
    <property type="evidence" value="ECO:0007669"/>
    <property type="project" value="UniProtKB-UniRule"/>
</dbReference>
<dbReference type="GO" id="GO:0010468">
    <property type="term" value="P:regulation of gene expression"/>
    <property type="evidence" value="ECO:0007669"/>
    <property type="project" value="TreeGrafter"/>
</dbReference>
<dbReference type="GO" id="GO:0006364">
    <property type="term" value="P:rRNA processing"/>
    <property type="evidence" value="ECO:0007669"/>
    <property type="project" value="UniProtKB-UniRule"/>
</dbReference>
<dbReference type="GO" id="GO:0008033">
    <property type="term" value="P:tRNA processing"/>
    <property type="evidence" value="ECO:0007669"/>
    <property type="project" value="UniProtKB-KW"/>
</dbReference>
<dbReference type="CDD" id="cd10845">
    <property type="entry name" value="DSRM_RNAse_III_family"/>
    <property type="match status" value="1"/>
</dbReference>
<dbReference type="CDD" id="cd00593">
    <property type="entry name" value="RIBOc"/>
    <property type="match status" value="1"/>
</dbReference>
<dbReference type="FunFam" id="3.30.160.20:FF:000003">
    <property type="entry name" value="Ribonuclease 3"/>
    <property type="match status" value="1"/>
</dbReference>
<dbReference type="Gene3D" id="3.30.160.20">
    <property type="match status" value="1"/>
</dbReference>
<dbReference type="Gene3D" id="1.10.1520.10">
    <property type="entry name" value="Ribonuclease III domain"/>
    <property type="match status" value="1"/>
</dbReference>
<dbReference type="HAMAP" id="MF_00104">
    <property type="entry name" value="RNase_III"/>
    <property type="match status" value="1"/>
</dbReference>
<dbReference type="InterPro" id="IPR014720">
    <property type="entry name" value="dsRBD_dom"/>
</dbReference>
<dbReference type="InterPro" id="IPR011907">
    <property type="entry name" value="RNase_III"/>
</dbReference>
<dbReference type="InterPro" id="IPR000999">
    <property type="entry name" value="RNase_III_dom"/>
</dbReference>
<dbReference type="InterPro" id="IPR036389">
    <property type="entry name" value="RNase_III_sf"/>
</dbReference>
<dbReference type="NCBIfam" id="TIGR02191">
    <property type="entry name" value="RNaseIII"/>
    <property type="match status" value="1"/>
</dbReference>
<dbReference type="PANTHER" id="PTHR11207:SF0">
    <property type="entry name" value="RIBONUCLEASE 3"/>
    <property type="match status" value="1"/>
</dbReference>
<dbReference type="PANTHER" id="PTHR11207">
    <property type="entry name" value="RIBONUCLEASE III"/>
    <property type="match status" value="1"/>
</dbReference>
<dbReference type="Pfam" id="PF00035">
    <property type="entry name" value="dsrm"/>
    <property type="match status" value="1"/>
</dbReference>
<dbReference type="Pfam" id="PF14622">
    <property type="entry name" value="Ribonucleas_3_3"/>
    <property type="match status" value="1"/>
</dbReference>
<dbReference type="SMART" id="SM00358">
    <property type="entry name" value="DSRM"/>
    <property type="match status" value="1"/>
</dbReference>
<dbReference type="SMART" id="SM00535">
    <property type="entry name" value="RIBOc"/>
    <property type="match status" value="1"/>
</dbReference>
<dbReference type="SUPFAM" id="SSF54768">
    <property type="entry name" value="dsRNA-binding domain-like"/>
    <property type="match status" value="1"/>
</dbReference>
<dbReference type="SUPFAM" id="SSF69065">
    <property type="entry name" value="RNase III domain-like"/>
    <property type="match status" value="1"/>
</dbReference>
<dbReference type="PROSITE" id="PS50137">
    <property type="entry name" value="DS_RBD"/>
    <property type="match status" value="1"/>
</dbReference>
<dbReference type="PROSITE" id="PS00517">
    <property type="entry name" value="RNASE_3_1"/>
    <property type="match status" value="1"/>
</dbReference>
<dbReference type="PROSITE" id="PS50142">
    <property type="entry name" value="RNASE_3_2"/>
    <property type="match status" value="1"/>
</dbReference>
<evidence type="ECO:0000255" key="1">
    <source>
        <dbReference type="HAMAP-Rule" id="MF_00104"/>
    </source>
</evidence>
<organism>
    <name type="scientific">Brucella canis (strain ATCC 23365 / NCTC 10854 / RM-666)</name>
    <dbReference type="NCBI Taxonomy" id="483179"/>
    <lineage>
        <taxon>Bacteria</taxon>
        <taxon>Pseudomonadati</taxon>
        <taxon>Pseudomonadota</taxon>
        <taxon>Alphaproteobacteria</taxon>
        <taxon>Hyphomicrobiales</taxon>
        <taxon>Brucellaceae</taxon>
        <taxon>Brucella/Ochrobactrum group</taxon>
        <taxon>Brucella</taxon>
    </lineage>
</organism>
<proteinExistence type="inferred from homology"/>
<protein>
    <recommendedName>
        <fullName evidence="1">Ribonuclease 3</fullName>
        <ecNumber evidence="1">3.1.26.3</ecNumber>
    </recommendedName>
    <alternativeName>
        <fullName evidence="1">Ribonuclease III</fullName>
        <shortName evidence="1">RNase III</shortName>
    </alternativeName>
</protein>